<dbReference type="EC" id="2.4.1.315"/>
<dbReference type="EMBL" id="CP000903">
    <property type="protein sequence ID" value="ABY41694.1"/>
    <property type="molecule type" value="Genomic_DNA"/>
</dbReference>
<dbReference type="RefSeq" id="WP_002125051.1">
    <property type="nucleotide sequence ID" value="NC_010184.1"/>
</dbReference>
<dbReference type="SMR" id="A9VSQ8"/>
<dbReference type="CAZy" id="GT28">
    <property type="family name" value="Glycosyltransferase Family 28"/>
</dbReference>
<dbReference type="KEGG" id="bwe:BcerKBAB4_0428"/>
<dbReference type="eggNOG" id="COG0707">
    <property type="taxonomic scope" value="Bacteria"/>
</dbReference>
<dbReference type="HOGENOM" id="CLU_028367_0_1_9"/>
<dbReference type="UniPathway" id="UPA00894"/>
<dbReference type="Proteomes" id="UP000002154">
    <property type="component" value="Chromosome"/>
</dbReference>
<dbReference type="GO" id="GO:0005886">
    <property type="term" value="C:plasma membrane"/>
    <property type="evidence" value="ECO:0007669"/>
    <property type="project" value="UniProtKB-SubCell"/>
</dbReference>
<dbReference type="GO" id="GO:0047228">
    <property type="term" value="F:1,2-diacylglycerol 3-glucosyltransferase activity"/>
    <property type="evidence" value="ECO:0007669"/>
    <property type="project" value="UniProtKB-UniRule"/>
</dbReference>
<dbReference type="GO" id="GO:0009246">
    <property type="term" value="P:enterobacterial common antigen biosynthetic process"/>
    <property type="evidence" value="ECO:0007669"/>
    <property type="project" value="UniProtKB-UniPathway"/>
</dbReference>
<dbReference type="GO" id="GO:0009247">
    <property type="term" value="P:glycolipid biosynthetic process"/>
    <property type="evidence" value="ECO:0007669"/>
    <property type="project" value="UniProtKB-UniRule"/>
</dbReference>
<dbReference type="GO" id="GO:0070395">
    <property type="term" value="P:lipoteichoic acid biosynthetic process"/>
    <property type="evidence" value="ECO:0007669"/>
    <property type="project" value="UniProtKB-UniRule"/>
</dbReference>
<dbReference type="CDD" id="cd17507">
    <property type="entry name" value="GT28_Beta-DGS-like"/>
    <property type="match status" value="1"/>
</dbReference>
<dbReference type="Gene3D" id="3.40.50.2000">
    <property type="entry name" value="Glycogen Phosphorylase B"/>
    <property type="match status" value="1"/>
</dbReference>
<dbReference type="HAMAP" id="MF_01280">
    <property type="entry name" value="Diacylglyc_glucosyltr"/>
    <property type="match status" value="1"/>
</dbReference>
<dbReference type="InterPro" id="IPR009695">
    <property type="entry name" value="Diacylglyc_glucosyltr_N"/>
</dbReference>
<dbReference type="InterPro" id="IPR007235">
    <property type="entry name" value="Glyco_trans_28_C"/>
</dbReference>
<dbReference type="InterPro" id="IPR050519">
    <property type="entry name" value="Glycosyltransf_28_UgtP"/>
</dbReference>
<dbReference type="InterPro" id="IPR023589">
    <property type="entry name" value="Pro_diacylglycrl_glcsylTrfase"/>
</dbReference>
<dbReference type="NCBIfam" id="NF010135">
    <property type="entry name" value="PRK13609.1"/>
    <property type="match status" value="1"/>
</dbReference>
<dbReference type="PANTHER" id="PTHR43025">
    <property type="entry name" value="MONOGALACTOSYLDIACYLGLYCEROL SYNTHASE"/>
    <property type="match status" value="1"/>
</dbReference>
<dbReference type="PANTHER" id="PTHR43025:SF3">
    <property type="entry name" value="MONOGALACTOSYLDIACYLGLYCEROL SYNTHASE 1, CHLOROPLASTIC"/>
    <property type="match status" value="1"/>
</dbReference>
<dbReference type="Pfam" id="PF04101">
    <property type="entry name" value="Glyco_tran_28_C"/>
    <property type="match status" value="1"/>
</dbReference>
<dbReference type="Pfam" id="PF06925">
    <property type="entry name" value="MGDG_synth"/>
    <property type="match status" value="1"/>
</dbReference>
<dbReference type="SUPFAM" id="SSF53756">
    <property type="entry name" value="UDP-Glycosyltransferase/glycogen phosphorylase"/>
    <property type="match status" value="1"/>
</dbReference>
<name>UGTP_BACMK</name>
<organism>
    <name type="scientific">Bacillus mycoides (strain KBAB4)</name>
    <name type="common">Bacillus weihenstephanensis</name>
    <dbReference type="NCBI Taxonomy" id="315730"/>
    <lineage>
        <taxon>Bacteria</taxon>
        <taxon>Bacillati</taxon>
        <taxon>Bacillota</taxon>
        <taxon>Bacilli</taxon>
        <taxon>Bacillales</taxon>
        <taxon>Bacillaceae</taxon>
        <taxon>Bacillus</taxon>
        <taxon>Bacillus cereus group</taxon>
    </lineage>
</organism>
<reference key="1">
    <citation type="journal article" date="2008" name="Chem. Biol. Interact.">
        <title>Extending the Bacillus cereus group genomics to putative food-borne pathogens of different toxicity.</title>
        <authorList>
            <person name="Lapidus A."/>
            <person name="Goltsman E."/>
            <person name="Auger S."/>
            <person name="Galleron N."/>
            <person name="Segurens B."/>
            <person name="Dossat C."/>
            <person name="Land M.L."/>
            <person name="Broussolle V."/>
            <person name="Brillard J."/>
            <person name="Guinebretiere M.-H."/>
            <person name="Sanchis V."/>
            <person name="Nguen-the C."/>
            <person name="Lereclus D."/>
            <person name="Richardson P."/>
            <person name="Wincker P."/>
            <person name="Weissenbach J."/>
            <person name="Ehrlich S.D."/>
            <person name="Sorokin A."/>
        </authorList>
    </citation>
    <scope>NUCLEOTIDE SEQUENCE [LARGE SCALE GENOMIC DNA]</scope>
    <source>
        <strain>KBAB4</strain>
    </source>
</reference>
<protein>
    <recommendedName>
        <fullName evidence="1">Processive diacylglycerol beta-glucosyltransferase</fullName>
        <ecNumber>2.4.1.315</ecNumber>
    </recommendedName>
    <alternativeName>
        <fullName evidence="1">Beta-diglucosyldiacylglycerol synthase</fullName>
        <shortName evidence="1">Beta-DGS</shortName>
        <shortName evidence="1">DGlcDAG synthase</shortName>
        <shortName evidence="1">Glc2-DAG synthase</shortName>
    </alternativeName>
    <alternativeName>
        <fullName evidence="1">Beta-gentiobiosyldiacylglycerol synthase</fullName>
    </alternativeName>
    <alternativeName>
        <fullName evidence="1">Beta-monoglucosyldiacylglycerol synthase</fullName>
        <shortName evidence="1">Beta-MGS</shortName>
        <shortName evidence="1">MGlcDAG synthase</shortName>
    </alternativeName>
    <alternativeName>
        <fullName evidence="1">Beta-triglucosyldiacylglycerol synthase</fullName>
        <shortName evidence="1">TGlcDAG synthase</shortName>
    </alternativeName>
    <alternativeName>
        <fullName>Diglucosyl diacylglycerol synthase (1,6-linking)</fullName>
    </alternativeName>
    <alternativeName>
        <fullName evidence="1">Glucosyl-beta-1,6-glucosyldiacylglycerol synthase</fullName>
    </alternativeName>
    <alternativeName>
        <fullName evidence="1">UDP glucosyltransferase</fullName>
    </alternativeName>
    <alternativeName>
        <fullName evidence="1">UDP-glucose:1,2-diacylglycerol-3-beta-D-glucosyltransferase</fullName>
    </alternativeName>
</protein>
<proteinExistence type="inferred from homology"/>
<comment type="function">
    <text evidence="1">Processive glucosyltransferase involved in the biosynthesis of both the bilayer- and non-bilayer-forming membrane glucolipids. Is able to successively transfer up to three glucosyl residues to diacylglycerol (DAG), thereby catalyzing the formation of beta-monoglucosyl-DAG (3-O-(beta-D-glucopyranosyl)-1,2-diacyl-sn-glycerol), beta-diglucosyl-DAG (3-O-(beta-D-glucopyranosyl-beta-(1-&gt;6)-D-glucopyranosyl)-1,2-diacyl-sn-glycerol) and beta-triglucosyl-DAG (3-O-(beta-D-glucopyranosyl-beta-(1-&gt;6)-D-glucopyranosyl-beta-(1-&gt;6)-D-glucopyranosyl)-1,2-diacyl-sn-glycerol). Beta-diglucosyl-DAG is the predominant glycolipid found in Bacillales and is also used as a membrane anchor for lipoteichoic acid (LTA).</text>
</comment>
<comment type="catalytic activity">
    <reaction>
        <text>a 1,2-diacyl-3-O-(beta-D-glucopyranosyl)-sn-glycerol + UDP-alpha-D-glucose = a 1,2-diacyl-3-O-(beta-D-Glc-(1-&gt;6)-beta-D-Glc)-sn-glycerol + UDP + H(+)</text>
        <dbReference type="Rhea" id="RHEA:39031"/>
        <dbReference type="ChEBI" id="CHEBI:15378"/>
        <dbReference type="ChEBI" id="CHEBI:58223"/>
        <dbReference type="ChEBI" id="CHEBI:58885"/>
        <dbReference type="ChEBI" id="CHEBI:75799"/>
        <dbReference type="ChEBI" id="CHEBI:76264"/>
        <dbReference type="EC" id="2.4.1.315"/>
    </reaction>
</comment>
<comment type="catalytic activity">
    <reaction>
        <text>a 1,2-diacyl-3-O-(beta-D-Glc-(1-&gt;6)-beta-D-Glc)-sn-glycerol + UDP-alpha-D-glucose = a 1,2-diacyl-3-O-(beta-D-Glc-(1-&gt;6)-beta-D-Glc-(1-&gt;6)-beta-D-Glc)-sn-glycerol + UDP + H(+)</text>
        <dbReference type="Rhea" id="RHEA:39027"/>
        <dbReference type="ChEBI" id="CHEBI:15378"/>
        <dbReference type="ChEBI" id="CHEBI:58223"/>
        <dbReference type="ChEBI" id="CHEBI:58885"/>
        <dbReference type="ChEBI" id="CHEBI:76264"/>
        <dbReference type="ChEBI" id="CHEBI:76265"/>
        <dbReference type="EC" id="2.4.1.315"/>
    </reaction>
</comment>
<comment type="catalytic activity">
    <reaction evidence="1">
        <text>a 1,2-diacyl-sn-glycerol + UDP-alpha-D-glucose = a 1,2-diacyl-3-O-(beta-D-glucopyranosyl)-sn-glycerol + UDP + H(+)</text>
        <dbReference type="Rhea" id="RHEA:17285"/>
        <dbReference type="ChEBI" id="CHEBI:15378"/>
        <dbReference type="ChEBI" id="CHEBI:17815"/>
        <dbReference type="ChEBI" id="CHEBI:58223"/>
        <dbReference type="ChEBI" id="CHEBI:58885"/>
        <dbReference type="ChEBI" id="CHEBI:75799"/>
    </reaction>
</comment>
<comment type="pathway">
    <text evidence="1">Glycolipid metabolism; diglucosyl-diacylglycerol biosynthesis.</text>
</comment>
<comment type="subcellular location">
    <subcellularLocation>
        <location evidence="1">Cell membrane</location>
    </subcellularLocation>
</comment>
<comment type="similarity">
    <text evidence="1">Belongs to the glycosyltransferase 28 family. UgtP subfamily.</text>
</comment>
<feature type="chain" id="PRO_1000140344" description="Processive diacylglycerol beta-glucosyltransferase">
    <location>
        <begin position="1"/>
        <end position="388"/>
    </location>
</feature>
<sequence>MIKNPKVLILTAHYGNGHVQVAKTLEQTFRQKGIEDVIVCDLFGESHPVITDITKYLYLKSYTVGKELYRLFYYGVEKIYDKKIASWYANFGRKRLKTLLQVEKPDIVINTFPIIAVPELKKQIGISIPVYNVLTDFCVHKIWIHREVDRYFVATDHVKKVMVDIGVPAEQIVETGIPIRSSFELKINPAIIYNKYQLCKDKKMLLIVAGAHGVLGSVKELCQSFMSVPNLQVVVVCGKNEALKQDLMELQEQGSDALKVFGYVENIDELFRVTSCMITKPGGITLSEAAALQVPVILYKPVPGQENENALYFEKKGAAVVIRDDSEVFAKTEALLQDDMKLLQMKEAMKSIYRPEPAGHIVDTILAENHAEPNHIPIKSPVLAESFT</sequence>
<accession>A9VSQ8</accession>
<keyword id="KW-0119">Carbohydrate metabolism</keyword>
<keyword id="KW-1003">Cell membrane</keyword>
<keyword id="KW-0328">Glycosyltransferase</keyword>
<keyword id="KW-0444">Lipid biosynthesis</keyword>
<keyword id="KW-0443">Lipid metabolism</keyword>
<keyword id="KW-0472">Membrane</keyword>
<keyword id="KW-0808">Transferase</keyword>
<gene>
    <name evidence="1" type="primary">ugtP</name>
    <name type="ordered locus">BcerKBAB4_0428</name>
</gene>
<evidence type="ECO:0000255" key="1">
    <source>
        <dbReference type="HAMAP-Rule" id="MF_01280"/>
    </source>
</evidence>